<protein>
    <recommendedName>
        <fullName evidence="1">Ribosome maturation factor RimM</fullName>
    </recommendedName>
</protein>
<keyword id="KW-0143">Chaperone</keyword>
<keyword id="KW-0963">Cytoplasm</keyword>
<keyword id="KW-1185">Reference proteome</keyword>
<keyword id="KW-0690">Ribosome biogenesis</keyword>
<keyword id="KW-0698">rRNA processing</keyword>
<gene>
    <name evidence="1" type="primary">rimM</name>
    <name type="ordered locus">Ccel_0712</name>
</gene>
<proteinExistence type="inferred from homology"/>
<comment type="function">
    <text evidence="1">An accessory protein needed during the final step in the assembly of 30S ribosomal subunit, possibly for assembly of the head region. Essential for efficient processing of 16S rRNA. May be needed both before and after RbfA during the maturation of 16S rRNA. It has affinity for free ribosomal 30S subunits but not for 70S ribosomes.</text>
</comment>
<comment type="subunit">
    <text evidence="1">Binds ribosomal protein uS19.</text>
</comment>
<comment type="subcellular location">
    <subcellularLocation>
        <location evidence="1">Cytoplasm</location>
    </subcellularLocation>
</comment>
<comment type="domain">
    <text evidence="1">The PRC barrel domain binds ribosomal protein uS19.</text>
</comment>
<comment type="similarity">
    <text evidence="1">Belongs to the RimM family.</text>
</comment>
<dbReference type="EMBL" id="CP001348">
    <property type="protein sequence ID" value="ACL75091.1"/>
    <property type="molecule type" value="Genomic_DNA"/>
</dbReference>
<dbReference type="RefSeq" id="WP_015924258.1">
    <property type="nucleotide sequence ID" value="NC_011898.1"/>
</dbReference>
<dbReference type="SMR" id="B8I7T4"/>
<dbReference type="STRING" id="394503.Ccel_0712"/>
<dbReference type="KEGG" id="cce:Ccel_0712"/>
<dbReference type="eggNOG" id="COG0806">
    <property type="taxonomic scope" value="Bacteria"/>
</dbReference>
<dbReference type="HOGENOM" id="CLU_077636_3_2_9"/>
<dbReference type="OrthoDB" id="9810331at2"/>
<dbReference type="Proteomes" id="UP000001349">
    <property type="component" value="Chromosome"/>
</dbReference>
<dbReference type="GO" id="GO:0005737">
    <property type="term" value="C:cytoplasm"/>
    <property type="evidence" value="ECO:0007669"/>
    <property type="project" value="UniProtKB-SubCell"/>
</dbReference>
<dbReference type="GO" id="GO:0005840">
    <property type="term" value="C:ribosome"/>
    <property type="evidence" value="ECO:0007669"/>
    <property type="project" value="InterPro"/>
</dbReference>
<dbReference type="GO" id="GO:0043022">
    <property type="term" value="F:ribosome binding"/>
    <property type="evidence" value="ECO:0007669"/>
    <property type="project" value="InterPro"/>
</dbReference>
<dbReference type="GO" id="GO:0042274">
    <property type="term" value="P:ribosomal small subunit biogenesis"/>
    <property type="evidence" value="ECO:0007669"/>
    <property type="project" value="UniProtKB-UniRule"/>
</dbReference>
<dbReference type="GO" id="GO:0006364">
    <property type="term" value="P:rRNA processing"/>
    <property type="evidence" value="ECO:0007669"/>
    <property type="project" value="UniProtKB-UniRule"/>
</dbReference>
<dbReference type="Gene3D" id="2.30.30.240">
    <property type="entry name" value="PRC-barrel domain"/>
    <property type="match status" value="1"/>
</dbReference>
<dbReference type="Gene3D" id="2.40.30.60">
    <property type="entry name" value="RimM"/>
    <property type="match status" value="1"/>
</dbReference>
<dbReference type="HAMAP" id="MF_00014">
    <property type="entry name" value="Ribosome_mat_RimM"/>
    <property type="match status" value="1"/>
</dbReference>
<dbReference type="InterPro" id="IPR011033">
    <property type="entry name" value="PRC_barrel-like_sf"/>
</dbReference>
<dbReference type="InterPro" id="IPR056792">
    <property type="entry name" value="PRC_RimM"/>
</dbReference>
<dbReference type="InterPro" id="IPR011961">
    <property type="entry name" value="RimM"/>
</dbReference>
<dbReference type="InterPro" id="IPR002676">
    <property type="entry name" value="RimM_N"/>
</dbReference>
<dbReference type="InterPro" id="IPR036976">
    <property type="entry name" value="RimM_N_sf"/>
</dbReference>
<dbReference type="InterPro" id="IPR009000">
    <property type="entry name" value="Transl_B-barrel_sf"/>
</dbReference>
<dbReference type="NCBIfam" id="TIGR02273">
    <property type="entry name" value="16S_RimM"/>
    <property type="match status" value="1"/>
</dbReference>
<dbReference type="PANTHER" id="PTHR33692">
    <property type="entry name" value="RIBOSOME MATURATION FACTOR RIMM"/>
    <property type="match status" value="1"/>
</dbReference>
<dbReference type="PANTHER" id="PTHR33692:SF1">
    <property type="entry name" value="RIBOSOME MATURATION FACTOR RIMM"/>
    <property type="match status" value="1"/>
</dbReference>
<dbReference type="Pfam" id="PF24986">
    <property type="entry name" value="PRC_RimM"/>
    <property type="match status" value="1"/>
</dbReference>
<dbReference type="Pfam" id="PF01782">
    <property type="entry name" value="RimM"/>
    <property type="match status" value="1"/>
</dbReference>
<dbReference type="SUPFAM" id="SSF50346">
    <property type="entry name" value="PRC-barrel domain"/>
    <property type="match status" value="1"/>
</dbReference>
<dbReference type="SUPFAM" id="SSF50447">
    <property type="entry name" value="Translation proteins"/>
    <property type="match status" value="1"/>
</dbReference>
<evidence type="ECO:0000255" key="1">
    <source>
        <dbReference type="HAMAP-Rule" id="MF_00014"/>
    </source>
</evidence>
<accession>B8I7T4</accession>
<reference key="1">
    <citation type="submission" date="2009-01" db="EMBL/GenBank/DDBJ databases">
        <title>Complete sequence of Clostridium cellulolyticum H10.</title>
        <authorList>
            <consortium name="US DOE Joint Genome Institute"/>
            <person name="Lucas S."/>
            <person name="Copeland A."/>
            <person name="Lapidus A."/>
            <person name="Glavina del Rio T."/>
            <person name="Dalin E."/>
            <person name="Tice H."/>
            <person name="Bruce D."/>
            <person name="Goodwin L."/>
            <person name="Pitluck S."/>
            <person name="Chertkov O."/>
            <person name="Saunders E."/>
            <person name="Brettin T."/>
            <person name="Detter J.C."/>
            <person name="Han C."/>
            <person name="Larimer F."/>
            <person name="Land M."/>
            <person name="Hauser L."/>
            <person name="Kyrpides N."/>
            <person name="Ivanova N."/>
            <person name="Zhou J."/>
            <person name="Richardson P."/>
        </authorList>
    </citation>
    <scope>NUCLEOTIDE SEQUENCE [LARGE SCALE GENOMIC DNA]</scope>
    <source>
        <strain>ATCC 35319 / DSM 5812 / JCM 6584 / H10</strain>
    </source>
</reference>
<sequence>MLEYLIVGQLINTHGVKGELKATSQTDDPQRFKKLKWVYIDKNGSLEKYDINGVKFFKQFIIIKFQGVDSIEEAEKLKGFYIKVDRANAVKLPENSFFISDIIGLKVYDENNQLLGELKDVIQTGSNDVYVVRDSDSKEILIPALKSVVKEVSIEEGKISVILPKGLLD</sequence>
<organism>
    <name type="scientific">Ruminiclostridium cellulolyticum (strain ATCC 35319 / DSM 5812 / JCM 6584 / H10)</name>
    <name type="common">Clostridium cellulolyticum</name>
    <dbReference type="NCBI Taxonomy" id="394503"/>
    <lineage>
        <taxon>Bacteria</taxon>
        <taxon>Bacillati</taxon>
        <taxon>Bacillota</taxon>
        <taxon>Clostridia</taxon>
        <taxon>Eubacteriales</taxon>
        <taxon>Oscillospiraceae</taxon>
        <taxon>Ruminiclostridium</taxon>
    </lineage>
</organism>
<feature type="chain" id="PRO_1000116564" description="Ribosome maturation factor RimM">
    <location>
        <begin position="1"/>
        <end position="169"/>
    </location>
</feature>
<feature type="domain" description="PRC barrel" evidence="1">
    <location>
        <begin position="93"/>
        <end position="167"/>
    </location>
</feature>
<name>RIMM_RUMCH</name>